<dbReference type="EC" id="1.1.1.-" evidence="5 6 7"/>
<dbReference type="EC" id="1.1.1.216" evidence="5 6"/>
<dbReference type="EMBL" id="AABR07028443">
    <property type="status" value="NOT_ANNOTATED_CDS"/>
    <property type="molecule type" value="Genomic_DNA"/>
</dbReference>
<dbReference type="EMBL" id="CH473990">
    <property type="protein sequence ID" value="EDL78576.1"/>
    <property type="molecule type" value="Genomic_DNA"/>
</dbReference>
<dbReference type="RefSeq" id="NP_001103370.1">
    <property type="nucleotide sequence ID" value="NM_001109900.1"/>
</dbReference>
<dbReference type="SMR" id="D3ZF77"/>
<dbReference type="FunCoup" id="D3ZF77">
    <property type="interactions" value="25"/>
</dbReference>
<dbReference type="STRING" id="10116.ENSRNOP00000055113"/>
<dbReference type="iPTMnet" id="D3ZF77"/>
<dbReference type="PhosphoSitePlus" id="D3ZF77"/>
<dbReference type="PaxDb" id="10116-ENSRNOP00000055113"/>
<dbReference type="PeptideAtlas" id="D3ZF77"/>
<dbReference type="Ensembl" id="ENSRNOT00000058312.4">
    <property type="protein sequence ID" value="ENSRNOP00000055113.2"/>
    <property type="gene ID" value="ENSRNOG00000021735.6"/>
</dbReference>
<dbReference type="GeneID" id="361267"/>
<dbReference type="KEGG" id="rno:361267"/>
<dbReference type="UCSC" id="RGD:1307514">
    <property type="organism name" value="rat"/>
</dbReference>
<dbReference type="AGR" id="RGD:1307514"/>
<dbReference type="CTD" id="361267"/>
<dbReference type="RGD" id="1307514">
    <property type="gene designation" value="Akr1c15"/>
</dbReference>
<dbReference type="eggNOG" id="KOG1577">
    <property type="taxonomic scope" value="Eukaryota"/>
</dbReference>
<dbReference type="GeneTree" id="ENSGT00940000163184"/>
<dbReference type="HOGENOM" id="CLU_023205_0_0_1"/>
<dbReference type="InParanoid" id="D3ZF77"/>
<dbReference type="OMA" id="MYRNEKP"/>
<dbReference type="OrthoDB" id="6718at9989"/>
<dbReference type="PhylomeDB" id="D3ZF77"/>
<dbReference type="TreeFam" id="TF106492"/>
<dbReference type="PRO" id="PR:D3ZF77"/>
<dbReference type="Proteomes" id="UP000002494">
    <property type="component" value="Chromosome 17"/>
</dbReference>
<dbReference type="Proteomes" id="UP000234681">
    <property type="component" value="Chromosome 17"/>
</dbReference>
<dbReference type="Bgee" id="ENSRNOG00000021735">
    <property type="expression patterns" value="Expressed in lung and 18 other cell types or tissues"/>
</dbReference>
<dbReference type="ExpressionAtlas" id="D3ZF77">
    <property type="expression patterns" value="baseline and differential"/>
</dbReference>
<dbReference type="GO" id="GO:0005737">
    <property type="term" value="C:cytoplasm"/>
    <property type="evidence" value="ECO:0000314"/>
    <property type="project" value="UniProtKB"/>
</dbReference>
<dbReference type="GO" id="GO:0005829">
    <property type="term" value="C:cytosol"/>
    <property type="evidence" value="ECO:0000318"/>
    <property type="project" value="GO_Central"/>
</dbReference>
<dbReference type="GO" id="GO:0004033">
    <property type="term" value="F:aldo-keto reductase (NADPH) activity"/>
    <property type="evidence" value="ECO:0000314"/>
    <property type="project" value="UniProtKB"/>
</dbReference>
<dbReference type="GO" id="GO:0004032">
    <property type="term" value="F:aldose reductase (NADPH) activity"/>
    <property type="evidence" value="ECO:0000318"/>
    <property type="project" value="GO_Central"/>
</dbReference>
<dbReference type="GO" id="GO:0047886">
    <property type="term" value="F:farnesol dehydrogenase activity"/>
    <property type="evidence" value="ECO:0007669"/>
    <property type="project" value="UniProtKB-EC"/>
</dbReference>
<dbReference type="GO" id="GO:0047086">
    <property type="term" value="F:ketosteroid monooxygenase activity"/>
    <property type="evidence" value="ECO:0000318"/>
    <property type="project" value="GO_Central"/>
</dbReference>
<dbReference type="GO" id="GO:0016229">
    <property type="term" value="F:steroid dehydrogenase activity"/>
    <property type="evidence" value="ECO:0000318"/>
    <property type="project" value="GO_Central"/>
</dbReference>
<dbReference type="GO" id="GO:0001516">
    <property type="term" value="P:prostaglandin biosynthetic process"/>
    <property type="evidence" value="ECO:0000266"/>
    <property type="project" value="RGD"/>
</dbReference>
<dbReference type="GO" id="GO:0008202">
    <property type="term" value="P:steroid metabolic process"/>
    <property type="evidence" value="ECO:0000318"/>
    <property type="project" value="GO_Central"/>
</dbReference>
<dbReference type="CDD" id="cd19108">
    <property type="entry name" value="AKR_AKR1C1-35"/>
    <property type="match status" value="1"/>
</dbReference>
<dbReference type="FunFam" id="3.20.20.100:FF:000003">
    <property type="entry name" value="Aldo-keto reductase family 1 member C3"/>
    <property type="match status" value="1"/>
</dbReference>
<dbReference type="Gene3D" id="3.20.20.100">
    <property type="entry name" value="NADP-dependent oxidoreductase domain"/>
    <property type="match status" value="1"/>
</dbReference>
<dbReference type="InterPro" id="IPR020471">
    <property type="entry name" value="AKR"/>
</dbReference>
<dbReference type="InterPro" id="IPR044482">
    <property type="entry name" value="AKR1C"/>
</dbReference>
<dbReference type="InterPro" id="IPR018170">
    <property type="entry name" value="Aldo/ket_reductase_CS"/>
</dbReference>
<dbReference type="InterPro" id="IPR023210">
    <property type="entry name" value="NADP_OxRdtase_dom"/>
</dbReference>
<dbReference type="InterPro" id="IPR036812">
    <property type="entry name" value="NADP_OxRdtase_dom_sf"/>
</dbReference>
<dbReference type="PANTHER" id="PTHR11732">
    <property type="entry name" value="ALDO/KETO REDUCTASE"/>
    <property type="match status" value="1"/>
</dbReference>
<dbReference type="Pfam" id="PF00248">
    <property type="entry name" value="Aldo_ket_red"/>
    <property type="match status" value="1"/>
</dbReference>
<dbReference type="PIRSF" id="PIRSF000097">
    <property type="entry name" value="AKR"/>
    <property type="match status" value="1"/>
</dbReference>
<dbReference type="PRINTS" id="PR00069">
    <property type="entry name" value="ALDKETRDTASE"/>
</dbReference>
<dbReference type="SUPFAM" id="SSF51430">
    <property type="entry name" value="NAD(P)-linked oxidoreductase"/>
    <property type="match status" value="1"/>
</dbReference>
<dbReference type="PROSITE" id="PS00798">
    <property type="entry name" value="ALDOKETO_REDUCTASE_1"/>
    <property type="match status" value="1"/>
</dbReference>
<dbReference type="PROSITE" id="PS00062">
    <property type="entry name" value="ALDOKETO_REDUCTASE_2"/>
    <property type="match status" value="1"/>
</dbReference>
<dbReference type="PROSITE" id="PS00063">
    <property type="entry name" value="ALDOKETO_REDUCTASE_3"/>
    <property type="match status" value="1"/>
</dbReference>
<evidence type="ECO:0000250" key="1">
    <source>
        <dbReference type="UniProtKB" id="O60218"/>
    </source>
</evidence>
<evidence type="ECO:0000255" key="2">
    <source>
        <dbReference type="PIRSR" id="PIRSR000097-1"/>
    </source>
</evidence>
<evidence type="ECO:0000255" key="3">
    <source>
        <dbReference type="PIRSR" id="PIRSR000097-2"/>
    </source>
</evidence>
<evidence type="ECO:0000255" key="4">
    <source>
        <dbReference type="PIRSR" id="PIRSR000097-3"/>
    </source>
</evidence>
<evidence type="ECO:0000269" key="5">
    <source>
    </source>
</evidence>
<evidence type="ECO:0000269" key="6">
    <source>
    </source>
</evidence>
<evidence type="ECO:0000269" key="7">
    <source>
    </source>
</evidence>
<evidence type="ECO:0000269" key="8">
    <source>
    </source>
</evidence>
<evidence type="ECO:0000303" key="9">
    <source>
    </source>
</evidence>
<evidence type="ECO:0000303" key="10">
    <source>
    </source>
</evidence>
<evidence type="ECO:0000305" key="11"/>
<evidence type="ECO:0000312" key="12">
    <source>
        <dbReference type="EMBL" id="EDL78576.1"/>
    </source>
</evidence>
<evidence type="ECO:0000312" key="13">
    <source>
        <dbReference type="Proteomes" id="UP000002494"/>
    </source>
</evidence>
<evidence type="ECO:0000312" key="14">
    <source>
        <dbReference type="RGD" id="1307514"/>
    </source>
</evidence>
<reference evidence="13" key="1">
    <citation type="journal article" date="2004" name="Nature">
        <title>Genome sequence of the Brown Norway rat yields insights into mammalian evolution.</title>
        <authorList>
            <person name="Gibbs R.A."/>
            <person name="Weinstock G.M."/>
            <person name="Metzker M.L."/>
            <person name="Muzny D.M."/>
            <person name="Sodergren E.J."/>
            <person name="Scherer S."/>
            <person name="Scott G."/>
            <person name="Steffen D."/>
            <person name="Worley K.C."/>
            <person name="Burch P.E."/>
            <person name="Okwuonu G."/>
            <person name="Hines S."/>
            <person name="Lewis L."/>
            <person name="Deramo C."/>
            <person name="Delgado O."/>
            <person name="Dugan-Rocha S."/>
            <person name="Miner G."/>
            <person name="Morgan M."/>
            <person name="Hawes A."/>
            <person name="Gill R."/>
            <person name="Holt R.A."/>
            <person name="Adams M.D."/>
            <person name="Amanatides P.G."/>
            <person name="Baden-Tillson H."/>
            <person name="Barnstead M."/>
            <person name="Chin S."/>
            <person name="Evans C.A."/>
            <person name="Ferriera S."/>
            <person name="Fosler C."/>
            <person name="Glodek A."/>
            <person name="Gu Z."/>
            <person name="Jennings D."/>
            <person name="Kraft C.L."/>
            <person name="Nguyen T."/>
            <person name="Pfannkoch C.M."/>
            <person name="Sitter C."/>
            <person name="Sutton G.G."/>
            <person name="Venter J.C."/>
            <person name="Woodage T."/>
            <person name="Smith D."/>
            <person name="Lee H.-M."/>
            <person name="Gustafson E."/>
            <person name="Cahill P."/>
            <person name="Kana A."/>
            <person name="Doucette-Stamm L."/>
            <person name="Weinstock K."/>
            <person name="Fechtel K."/>
            <person name="Weiss R.B."/>
            <person name="Dunn D.M."/>
            <person name="Green E.D."/>
            <person name="Blakesley R.W."/>
            <person name="Bouffard G.G."/>
            <person name="De Jong P.J."/>
            <person name="Osoegawa K."/>
            <person name="Zhu B."/>
            <person name="Marra M."/>
            <person name="Schein J."/>
            <person name="Bosdet I."/>
            <person name="Fjell C."/>
            <person name="Jones S."/>
            <person name="Krzywinski M."/>
            <person name="Mathewson C."/>
            <person name="Siddiqui A."/>
            <person name="Wye N."/>
            <person name="McPherson J."/>
            <person name="Zhao S."/>
            <person name="Fraser C.M."/>
            <person name="Shetty J."/>
            <person name="Shatsman S."/>
            <person name="Geer K."/>
            <person name="Chen Y."/>
            <person name="Abramzon S."/>
            <person name="Nierman W.C."/>
            <person name="Havlak P.H."/>
            <person name="Chen R."/>
            <person name="Durbin K.J."/>
            <person name="Egan A."/>
            <person name="Ren Y."/>
            <person name="Song X.-Z."/>
            <person name="Li B."/>
            <person name="Liu Y."/>
            <person name="Qin X."/>
            <person name="Cawley S."/>
            <person name="Cooney A.J."/>
            <person name="D'Souza L.M."/>
            <person name="Martin K."/>
            <person name="Wu J.Q."/>
            <person name="Gonzalez-Garay M.L."/>
            <person name="Jackson A.R."/>
            <person name="Kalafus K.J."/>
            <person name="McLeod M.P."/>
            <person name="Milosavljevic A."/>
            <person name="Virk D."/>
            <person name="Volkov A."/>
            <person name="Wheeler D.A."/>
            <person name="Zhang Z."/>
            <person name="Bailey J.A."/>
            <person name="Eichler E.E."/>
            <person name="Tuzun E."/>
            <person name="Birney E."/>
            <person name="Mongin E."/>
            <person name="Ureta-Vidal A."/>
            <person name="Woodwark C."/>
            <person name="Zdobnov E."/>
            <person name="Bork P."/>
            <person name="Suyama M."/>
            <person name="Torrents D."/>
            <person name="Alexandersson M."/>
            <person name="Trask B.J."/>
            <person name="Young J.M."/>
            <person name="Huang H."/>
            <person name="Wang H."/>
            <person name="Xing H."/>
            <person name="Daniels S."/>
            <person name="Gietzen D."/>
            <person name="Schmidt J."/>
            <person name="Stevens K."/>
            <person name="Vitt U."/>
            <person name="Wingrove J."/>
            <person name="Camara F."/>
            <person name="Mar Alba M."/>
            <person name="Abril J.F."/>
            <person name="Guigo R."/>
            <person name="Smit A."/>
            <person name="Dubchak I."/>
            <person name="Rubin E.M."/>
            <person name="Couronne O."/>
            <person name="Poliakov A."/>
            <person name="Huebner N."/>
            <person name="Ganten D."/>
            <person name="Goesele C."/>
            <person name="Hummel O."/>
            <person name="Kreitler T."/>
            <person name="Lee Y.-A."/>
            <person name="Monti J."/>
            <person name="Schulz H."/>
            <person name="Zimdahl H."/>
            <person name="Himmelbauer H."/>
            <person name="Lehrach H."/>
            <person name="Jacob H.J."/>
            <person name="Bromberg S."/>
            <person name="Gullings-Handley J."/>
            <person name="Jensen-Seaman M.I."/>
            <person name="Kwitek A.E."/>
            <person name="Lazar J."/>
            <person name="Pasko D."/>
            <person name="Tonellato P.J."/>
            <person name="Twigger S."/>
            <person name="Ponting C.P."/>
            <person name="Duarte J.M."/>
            <person name="Rice S."/>
            <person name="Goodstadt L."/>
            <person name="Beatson S.A."/>
            <person name="Emes R.D."/>
            <person name="Winter E.E."/>
            <person name="Webber C."/>
            <person name="Brandt P."/>
            <person name="Nyakatura G."/>
            <person name="Adetobi M."/>
            <person name="Chiaromonte F."/>
            <person name="Elnitski L."/>
            <person name="Eswara P."/>
            <person name="Hardison R.C."/>
            <person name="Hou M."/>
            <person name="Kolbe D."/>
            <person name="Makova K."/>
            <person name="Miller W."/>
            <person name="Nekrutenko A."/>
            <person name="Riemer C."/>
            <person name="Schwartz S."/>
            <person name="Taylor J."/>
            <person name="Yang S."/>
            <person name="Zhang Y."/>
            <person name="Lindpaintner K."/>
            <person name="Andrews T.D."/>
            <person name="Caccamo M."/>
            <person name="Clamp M."/>
            <person name="Clarke L."/>
            <person name="Curwen V."/>
            <person name="Durbin R.M."/>
            <person name="Eyras E."/>
            <person name="Searle S.M."/>
            <person name="Cooper G.M."/>
            <person name="Batzoglou S."/>
            <person name="Brudno M."/>
            <person name="Sidow A."/>
            <person name="Stone E.A."/>
            <person name="Payseur B.A."/>
            <person name="Bourque G."/>
            <person name="Lopez-Otin C."/>
            <person name="Puente X.S."/>
            <person name="Chakrabarti K."/>
            <person name="Chatterji S."/>
            <person name="Dewey C."/>
            <person name="Pachter L."/>
            <person name="Bray N."/>
            <person name="Yap V.B."/>
            <person name="Caspi A."/>
            <person name="Tesler G."/>
            <person name="Pevzner P.A."/>
            <person name="Haussler D."/>
            <person name="Roskin K.M."/>
            <person name="Baertsch R."/>
            <person name="Clawson H."/>
            <person name="Furey T.S."/>
            <person name="Hinrichs A.S."/>
            <person name="Karolchik D."/>
            <person name="Kent W.J."/>
            <person name="Rosenbloom K.R."/>
            <person name="Trumbower H."/>
            <person name="Weirauch M."/>
            <person name="Cooper D.N."/>
            <person name="Stenson P.D."/>
            <person name="Ma B."/>
            <person name="Brent M."/>
            <person name="Arumugam M."/>
            <person name="Shteynberg D."/>
            <person name="Copley R.R."/>
            <person name="Taylor M.S."/>
            <person name="Riethman H."/>
            <person name="Mudunuri U."/>
            <person name="Peterson J."/>
            <person name="Guyer M."/>
            <person name="Felsenfeld A."/>
            <person name="Old S."/>
            <person name="Mockrin S."/>
            <person name="Collins F.S."/>
        </authorList>
    </citation>
    <scope>NUCLEOTIDE SEQUENCE [LARGE SCALE GENOMIC DNA]</scope>
    <source>
        <strain evidence="13">Brown Norway</strain>
    </source>
</reference>
<reference evidence="12" key="2">
    <citation type="submission" date="2005-07" db="EMBL/GenBank/DDBJ databases">
        <authorList>
            <person name="Mural R.J."/>
            <person name="Adams M.D."/>
            <person name="Myers E.W."/>
            <person name="Smith H.O."/>
            <person name="Venter J.C."/>
        </authorList>
    </citation>
    <scope>NUCLEOTIDE SEQUENCE [LARGE SCALE GENOMIC DNA]</scope>
</reference>
<reference evidence="11" key="3">
    <citation type="journal article" date="1994" name="Biochemistry">
        <title>Structure and tissue-specific expression of the aldo-keto reductase superfamily.</title>
        <authorList>
            <person name="Qin K.N."/>
            <person name="Cheng K.C."/>
        </authorList>
    </citation>
    <scope>IDENTIFICATION</scope>
    <scope>TISSUE SPECIFICITY</scope>
</reference>
<reference evidence="11" key="4">
    <citation type="journal article" date="2007" name="Arch. Biochem. Biophys.">
        <title>Enzymatic characteristics of an aldo-keto reductase family protein (AKR1C15) and its localization in rat tissues.</title>
        <authorList>
            <person name="Endo S."/>
            <person name="Matsunaga T."/>
            <person name="Horie K."/>
            <person name="Tajima K."/>
            <person name="Bunai Y."/>
            <person name="Carbone V."/>
            <person name="El-Kabbani O."/>
            <person name="Hara A."/>
        </authorList>
    </citation>
    <scope>FUNCTION</scope>
    <scope>CATALYTIC ACTIVITY</scope>
    <scope>ACTIVITY REGULATION</scope>
    <scope>BIOPHYSICOCHEMICAL PROPERTIES</scope>
    <scope>SUBUNIT</scope>
    <scope>SUBCELLULAR LOCATION</scope>
    <scope>TISSUE SPECIFICITY</scope>
</reference>
<reference evidence="11" key="5">
    <citation type="journal article" date="2011" name="Chem. Biol. Interact.">
        <title>Roles of rat and human aldo-keto reductases in metabolism of farnesol and geranylgeraniol.</title>
        <authorList>
            <person name="Endo S."/>
            <person name="Matsunaga T."/>
            <person name="Ohta C."/>
            <person name="Soda M."/>
            <person name="Kanamori A."/>
            <person name="Kitade Y."/>
            <person name="Ohno S."/>
            <person name="Tajima K."/>
            <person name="El-Kabbani O."/>
            <person name="Hara A."/>
        </authorList>
    </citation>
    <scope>FUNCTION</scope>
    <scope>CATALYTIC ACTIVITY</scope>
    <scope>BIOPHYSICOCHEMICAL PROPERTIES</scope>
    <scope>SUBCELLULAR LOCATION</scope>
    <scope>TISSUE SPECIFICITY</scope>
</reference>
<reference evidence="11" key="6">
    <citation type="journal article" date="2011" name="Chem. Biol. Interact.">
        <title>Protective effect of rat aldo-keto reductase (AKR1C15) on endothelial cell damage elicited by 4-hydroxy-2-nonenal.</title>
        <authorList>
            <person name="Matsunaga T."/>
            <person name="Shinoda Y."/>
            <person name="Inoue Y."/>
            <person name="Endo S."/>
            <person name="El-Kabbani O."/>
            <person name="Hara A."/>
        </authorList>
    </citation>
    <scope>FUNCTION</scope>
    <scope>CATALYTIC ACTIVITY</scope>
</reference>
<sequence>MDLKHSRSVKLNDGNLMPVLGFGTFASKEIPKSKAAEATKVAIDVGFRHIDAAYFYQNEEEVGQALRDKMADGTVKREDLFYTTKIWITFLRPELVRQCLERSLKKLGLDYVDLCIIHIPIAMKPGEELLPKDANGKFIFDTVDIRDTWEALEKCKDAGLSKSIGVSNFNHKQLELILNKPRLKYKPTCNQVECHPYLNQSKLLEFCKSKDIVLVAYSALGSHRDSSWVSSDSPYLLEDPVLMTIAKKHNQTPGQVALRYQLQRGVVVLAKSFNEKRIKENFQVFDFELTPEDMKTIDSLNRNFRYSQMAFALDHPDYPFLEEY</sequence>
<protein>
    <recommendedName>
        <fullName evidence="11">Aldo-keto reductase family 1 member C15</fullName>
        <ecNumber evidence="5 6 7">1.1.1.-</ecNumber>
        <ecNumber evidence="5 6">1.1.1.216</ecNumber>
    </recommendedName>
    <alternativeName>
        <fullName evidence="10">RAKc</fullName>
    </alternativeName>
</protein>
<accession>D3ZF77</accession>
<keyword id="KW-0963">Cytoplasm</keyword>
<keyword id="KW-0521">NADP</keyword>
<keyword id="KW-0560">Oxidoreductase</keyword>
<keyword id="KW-1185">Reference proteome</keyword>
<gene>
    <name evidence="9 14" type="primary">Akr1c15</name>
    <name evidence="14" type="synonym">Akr1cl</name>
</gene>
<proteinExistence type="evidence at protein level"/>
<organism evidence="13">
    <name type="scientific">Rattus norvegicus</name>
    <name type="common">Rat</name>
    <dbReference type="NCBI Taxonomy" id="10116"/>
    <lineage>
        <taxon>Eukaryota</taxon>
        <taxon>Metazoa</taxon>
        <taxon>Chordata</taxon>
        <taxon>Craniata</taxon>
        <taxon>Vertebrata</taxon>
        <taxon>Euteleostomi</taxon>
        <taxon>Mammalia</taxon>
        <taxon>Eutheria</taxon>
        <taxon>Euarchontoglires</taxon>
        <taxon>Glires</taxon>
        <taxon>Rodentia</taxon>
        <taxon>Myomorpha</taxon>
        <taxon>Muroidea</taxon>
        <taxon>Muridae</taxon>
        <taxon>Murinae</taxon>
        <taxon>Rattus</taxon>
    </lineage>
</organism>
<comment type="function">
    <text evidence="5 6 7">Catalyzes the NADPH-dependent reduction of a variety of substrates including aromatic and aliphatic aldehydes, quinones, ketones, dicarbonyl compounds and 17-ketosteroids (PubMed:17574202). Catalyzes the NADP(+)-dependent oxidation of aromatic, alicyclic and aliphatic alcohols, and 17beta-hydroxysteroids (PubMed:17574202). To a lesser extent, can also catalyze the reduction of some aldoses and ketoses and the oxidation of some sugar alcohols (PubMed:17574202). In the stomach, lung and colon tissues, mediates the reduction of farnesal and geranylgeranial into farnesol and geranylgeraniol respectively (PubMed:21187079). By reducing 4-hydroxy-2-nonenal (HNE), produced during lipid peroxidation, into 1,4-dihydro-2-nonene (DHN), protects vascular endothelial cells from damage elicited by oxidized lipoproteins (PubMed:21187080).</text>
</comment>
<comment type="catalytic activity">
    <reaction evidence="5 6">
        <text>(2E,6E)-farnesol + NADP(+) = (2E,6E)-farnesal + NADPH + H(+)</text>
        <dbReference type="Rhea" id="RHEA:14697"/>
        <dbReference type="ChEBI" id="CHEBI:15378"/>
        <dbReference type="ChEBI" id="CHEBI:15894"/>
        <dbReference type="ChEBI" id="CHEBI:16619"/>
        <dbReference type="ChEBI" id="CHEBI:57783"/>
        <dbReference type="ChEBI" id="CHEBI:58349"/>
        <dbReference type="EC" id="1.1.1.216"/>
    </reaction>
</comment>
<comment type="activity regulation">
    <text evidence="5">The dehydrogenase activity is inhibited by 3',3'',5',5''-tetraiodophenolphthalein, phenolphthalein, genistein, quercetin, zearalenone and diethylstilbestrol.</text>
</comment>
<comment type="biophysicochemical properties">
    <kinetics>
        <KM evidence="5">1.2 uM for 4-nitrobenzaldehyde</KM>
        <KM evidence="5">3.1 uM for benzaldehyde</KM>
        <KM evidence="5">20 uM for pyridine-4-aldehyde</KM>
        <KM evidence="5">25 uM for 2-phenyl-2-propenal</KM>
        <KM evidence="5">2.4 uM for NADP(+)</KM>
        <KM evidence="5">1430 uM for NAD(+)</KM>
        <KM evidence="5">0.6 uM for NADPH</KM>
        <KM evidence="5">43 uM for NADH</KM>
        <KM evidence="5">0.3 uM for 1-decanal</KM>
        <KM evidence="5">0.9 uM for 1-nonanal</KM>
        <KM evidence="5">1.1 uM for 1-octanal</KM>
        <KM evidence="5">1.1 uM for 1-hexanal</KM>
        <KM evidence="5">112 uM for D-lactoaldehyde</KM>
        <KM evidence="5">125 uM for L-lactoaldehyde</KM>
        <KM evidence="5">225 uM for 4-methylpentanal (isocaproaldehyde)</KM>
        <KM evidence="5">0.4 uM for all-trans-retinal</KM>
        <KM evidence="5">3.5 uM for trans-2,4-nonadienal</KM>
        <KM evidence="5">3.3 uM for trans-2-nonenal</KM>
        <KM evidence="5">2.3 uM for 9-cis-retinal</KM>
        <KM evidence="5">2.5 uM for 4-hydroxy-2-nonenal (HNE)</KM>
        <KM evidence="5">0.8 uM for 6-tert-butyl-2,3-epoxy-4-benzoquinone (TBE)</KM>
        <KM evidence="5">2.7 uM for 1,4-naphthoquinone</KM>
        <KM evidence="5">14 uM for 5-hydroxy-1,4-naphthoquinone (juglone)</KM>
        <KM evidence="5">22 uM for 1-indanone</KM>
        <KM evidence="5">22 uM for 3-hydroxy-2-butanone</KM>
        <KM evidence="5">0.5 uM for 1H-indole-2,3-dione (isatin)</KM>
        <KM evidence="5">0.6 uM for 16-ketoestrone</KM>
        <KM evidence="5">2 uM for 2,3-hexanedione</KM>
        <KM evidence="5">5.5 uM for butane-2,3-dione (diacetyl)</KM>
        <KM evidence="5">16 uM for methylglyoxal</KM>
        <KM evidence="5">30 uM for 21-dehydrocortisol</KM>
        <KM evidence="5">12 uM for S-indan-1-ol</KM>
        <KM evidence="5">32 uM for farnesol</KM>
        <KM evidence="5">5.6 uM for farnesal</KM>
        <KM evidence="5">16 uM for geranylgeraniol</KM>
        <KM evidence="6">0.2 uM for geranylgeranial</KM>
        <KM evidence="5">15 uM for 1-nonanol</KM>
        <KM evidence="5">8.2 uM for 1-decanol</KM>
        <KM evidence="5">11 uM for 5-beta-androstane-3,17-dione (etiocholanedione)</KM>
        <KM evidence="5">8.7 uM for 5-alpha-androstane-3,17-dione (androstanedione)</KM>
        <KM evidence="5">5.6 uM for 4-androstene-3,17-dione</KM>
        <KM evidence="5">36 uM for 5-alpha-androstan-3alpha-ol-17-one</KM>
        <KM evidence="5">8.7 uM for 5-beta-androstan-3alpha-ol-17-one</KM>
        <KM evidence="5">8.5 uM for 5-beta-androstane-3alpha,17beta-diol</KM>
        <KM evidence="5">12 uM for 5-beta-androstan-17beta-ol-3-one</KM>
        <KM evidence="5">6.9 uM for 5-alpha-androstane-3-alpha,17-beta-diol</KM>
        <KM evidence="5">18 uM for testosterone</KM>
        <KM evidence="5">18 uM for 5-alpha-androstan-17beta-ol-3-one</KM>
    </kinetics>
    <phDependence>
        <text evidence="5">Optimum pH is 10.5 for the dehydrogenase activity. Optimum pH is 6 for the reductase activity.</text>
    </phDependence>
</comment>
<comment type="subunit">
    <text evidence="5">Monomer.</text>
</comment>
<comment type="subcellular location">
    <subcellularLocation>
        <location evidence="5 6">Cytoplasm</location>
    </subcellularLocation>
</comment>
<comment type="tissue specificity">
    <text evidence="5 6 8">Expressed in lung, specifically in bronchiolar club cells, type II alveolar cells and epithelial cells of the duct of the bronchial gland (at protein level) (PubMed:17574202, PubMed:21187079, PubMed:7511002). Expressed in gastric parietal cells and in epithelial cells of the large intestine and colon (at protein level) (PubMed:17574202, PubMed:21187079). Expressed in brown adipocytes (at protein level) (PubMed:17574202). Expressed in vascular endothelial cells (at protein level) (PubMed:17574202).</text>
</comment>
<comment type="similarity">
    <text evidence="11">Belongs to the aldo/keto reductase family.</text>
</comment>
<name>AK1CA_RAT</name>
<feature type="chain" id="PRO_0000445546" description="Aldo-keto reductase family 1 member C15">
    <location>
        <begin position="1"/>
        <end position="324"/>
    </location>
</feature>
<feature type="active site" description="Proton donor" evidence="2">
    <location>
        <position position="56"/>
    </location>
</feature>
<feature type="binding site" evidence="1">
    <location>
        <begin position="24"/>
        <end position="26"/>
    </location>
    <ligand>
        <name>NADP(+)</name>
        <dbReference type="ChEBI" id="CHEBI:58349"/>
    </ligand>
</feature>
<feature type="binding site" evidence="1">
    <location>
        <position position="51"/>
    </location>
    <ligand>
        <name>NADP(+)</name>
        <dbReference type="ChEBI" id="CHEBI:58349"/>
    </ligand>
</feature>
<feature type="binding site" evidence="3">
    <location>
        <position position="118"/>
    </location>
    <ligand>
        <name>substrate</name>
    </ligand>
</feature>
<feature type="binding site" evidence="1">
    <location>
        <begin position="167"/>
        <end position="168"/>
    </location>
    <ligand>
        <name>NADP(+)</name>
        <dbReference type="ChEBI" id="CHEBI:58349"/>
    </ligand>
</feature>
<feature type="binding site" evidence="1">
    <location>
        <position position="191"/>
    </location>
    <ligand>
        <name>NADP(+)</name>
        <dbReference type="ChEBI" id="CHEBI:58349"/>
    </ligand>
</feature>
<feature type="binding site" evidence="1">
    <location>
        <begin position="217"/>
        <end position="225"/>
    </location>
    <ligand>
        <name>NADP(+)</name>
        <dbReference type="ChEBI" id="CHEBI:58349"/>
    </ligand>
</feature>
<feature type="binding site" evidence="1">
    <location>
        <begin position="269"/>
        <end position="281"/>
    </location>
    <ligand>
        <name>NADP(+)</name>
        <dbReference type="ChEBI" id="CHEBI:58349"/>
    </ligand>
</feature>
<feature type="site" description="Lowers pKa of active site Tyr" evidence="4">
    <location>
        <position position="85"/>
    </location>
</feature>